<dbReference type="EC" id="6.3.5.-" evidence="1"/>
<dbReference type="EMBL" id="CP000943">
    <property type="protein sequence ID" value="ACA18679.1"/>
    <property type="molecule type" value="Genomic_DNA"/>
</dbReference>
<dbReference type="RefSeq" id="WP_012334068.1">
    <property type="nucleotide sequence ID" value="NC_010511.1"/>
</dbReference>
<dbReference type="SMR" id="B0UHC4"/>
<dbReference type="STRING" id="426117.M446_4336"/>
<dbReference type="KEGG" id="met:M446_4336"/>
<dbReference type="eggNOG" id="COG0064">
    <property type="taxonomic scope" value="Bacteria"/>
</dbReference>
<dbReference type="HOGENOM" id="CLU_019240_0_0_5"/>
<dbReference type="GO" id="GO:0050566">
    <property type="term" value="F:asparaginyl-tRNA synthase (glutamine-hydrolyzing) activity"/>
    <property type="evidence" value="ECO:0007669"/>
    <property type="project" value="RHEA"/>
</dbReference>
<dbReference type="GO" id="GO:0005524">
    <property type="term" value="F:ATP binding"/>
    <property type="evidence" value="ECO:0007669"/>
    <property type="project" value="UniProtKB-KW"/>
</dbReference>
<dbReference type="GO" id="GO:0050567">
    <property type="term" value="F:glutaminyl-tRNA synthase (glutamine-hydrolyzing) activity"/>
    <property type="evidence" value="ECO:0007669"/>
    <property type="project" value="UniProtKB-UniRule"/>
</dbReference>
<dbReference type="GO" id="GO:0070681">
    <property type="term" value="P:glutaminyl-tRNAGln biosynthesis via transamidation"/>
    <property type="evidence" value="ECO:0007669"/>
    <property type="project" value="TreeGrafter"/>
</dbReference>
<dbReference type="GO" id="GO:0006412">
    <property type="term" value="P:translation"/>
    <property type="evidence" value="ECO:0007669"/>
    <property type="project" value="UniProtKB-UniRule"/>
</dbReference>
<dbReference type="FunFam" id="1.10.10.410:FF:000001">
    <property type="entry name" value="Aspartyl/glutamyl-tRNA(Asn/Gln) amidotransferase subunit B"/>
    <property type="match status" value="1"/>
</dbReference>
<dbReference type="FunFam" id="1.10.150.380:FF:000001">
    <property type="entry name" value="Aspartyl/glutamyl-tRNA(Asn/Gln) amidotransferase subunit B"/>
    <property type="match status" value="1"/>
</dbReference>
<dbReference type="Gene3D" id="1.10.10.410">
    <property type="match status" value="1"/>
</dbReference>
<dbReference type="Gene3D" id="1.10.150.380">
    <property type="entry name" value="GatB domain, N-terminal subdomain"/>
    <property type="match status" value="1"/>
</dbReference>
<dbReference type="HAMAP" id="MF_00121">
    <property type="entry name" value="GatB"/>
    <property type="match status" value="1"/>
</dbReference>
<dbReference type="InterPro" id="IPR017959">
    <property type="entry name" value="Asn/Gln-tRNA_amidoTrfase_suB/E"/>
</dbReference>
<dbReference type="InterPro" id="IPR006075">
    <property type="entry name" value="Asn/Gln-tRNA_Trfase_suB/E_cat"/>
</dbReference>
<dbReference type="InterPro" id="IPR018027">
    <property type="entry name" value="Asn/Gln_amidotransferase"/>
</dbReference>
<dbReference type="InterPro" id="IPR003789">
    <property type="entry name" value="Asn/Gln_tRNA_amidoTrase-B-like"/>
</dbReference>
<dbReference type="InterPro" id="IPR004413">
    <property type="entry name" value="GatB"/>
</dbReference>
<dbReference type="InterPro" id="IPR042114">
    <property type="entry name" value="GatB_C_1"/>
</dbReference>
<dbReference type="InterPro" id="IPR023168">
    <property type="entry name" value="GatB_Yqey_C_2"/>
</dbReference>
<dbReference type="InterPro" id="IPR017958">
    <property type="entry name" value="Gln-tRNA_amidoTrfase_suB_CS"/>
</dbReference>
<dbReference type="InterPro" id="IPR014746">
    <property type="entry name" value="Gln_synth/guanido_kin_cat_dom"/>
</dbReference>
<dbReference type="NCBIfam" id="TIGR00133">
    <property type="entry name" value="gatB"/>
    <property type="match status" value="1"/>
</dbReference>
<dbReference type="NCBIfam" id="NF004012">
    <property type="entry name" value="PRK05477.1-2"/>
    <property type="match status" value="1"/>
</dbReference>
<dbReference type="NCBIfam" id="NF004014">
    <property type="entry name" value="PRK05477.1-4"/>
    <property type="match status" value="1"/>
</dbReference>
<dbReference type="NCBIfam" id="NF004015">
    <property type="entry name" value="PRK05477.1-5"/>
    <property type="match status" value="1"/>
</dbReference>
<dbReference type="PANTHER" id="PTHR11659">
    <property type="entry name" value="GLUTAMYL-TRNA GLN AMIDOTRANSFERASE SUBUNIT B MITOCHONDRIAL AND PROKARYOTIC PET112-RELATED"/>
    <property type="match status" value="1"/>
</dbReference>
<dbReference type="PANTHER" id="PTHR11659:SF0">
    <property type="entry name" value="GLUTAMYL-TRNA(GLN) AMIDOTRANSFERASE SUBUNIT B, MITOCHONDRIAL"/>
    <property type="match status" value="1"/>
</dbReference>
<dbReference type="Pfam" id="PF02934">
    <property type="entry name" value="GatB_N"/>
    <property type="match status" value="1"/>
</dbReference>
<dbReference type="Pfam" id="PF02637">
    <property type="entry name" value="GatB_Yqey"/>
    <property type="match status" value="1"/>
</dbReference>
<dbReference type="SMART" id="SM00845">
    <property type="entry name" value="GatB_Yqey"/>
    <property type="match status" value="1"/>
</dbReference>
<dbReference type="SUPFAM" id="SSF89095">
    <property type="entry name" value="GatB/YqeY motif"/>
    <property type="match status" value="1"/>
</dbReference>
<dbReference type="SUPFAM" id="SSF55931">
    <property type="entry name" value="Glutamine synthetase/guanido kinase"/>
    <property type="match status" value="1"/>
</dbReference>
<dbReference type="PROSITE" id="PS01234">
    <property type="entry name" value="GATB"/>
    <property type="match status" value="1"/>
</dbReference>
<feature type="chain" id="PRO_1000095225" description="Aspartyl/glutamyl-tRNA(Asn/Gln) amidotransferase subunit B">
    <location>
        <begin position="1"/>
        <end position="490"/>
    </location>
</feature>
<reference key="1">
    <citation type="submission" date="2008-02" db="EMBL/GenBank/DDBJ databases">
        <title>Complete sequence of chromosome of Methylobacterium sp. 4-46.</title>
        <authorList>
            <consortium name="US DOE Joint Genome Institute"/>
            <person name="Copeland A."/>
            <person name="Lucas S."/>
            <person name="Lapidus A."/>
            <person name="Glavina del Rio T."/>
            <person name="Dalin E."/>
            <person name="Tice H."/>
            <person name="Bruce D."/>
            <person name="Goodwin L."/>
            <person name="Pitluck S."/>
            <person name="Chertkov O."/>
            <person name="Brettin T."/>
            <person name="Detter J.C."/>
            <person name="Han C."/>
            <person name="Kuske C.R."/>
            <person name="Schmutz J."/>
            <person name="Larimer F."/>
            <person name="Land M."/>
            <person name="Hauser L."/>
            <person name="Kyrpides N."/>
            <person name="Ivanova N."/>
            <person name="Marx C.J."/>
            <person name="Richardson P."/>
        </authorList>
    </citation>
    <scope>NUCLEOTIDE SEQUENCE [LARGE SCALE GENOMIC DNA]</scope>
    <source>
        <strain>4-46</strain>
    </source>
</reference>
<evidence type="ECO:0000255" key="1">
    <source>
        <dbReference type="HAMAP-Rule" id="MF_00121"/>
    </source>
</evidence>
<comment type="function">
    <text evidence="1">Allows the formation of correctly charged Asn-tRNA(Asn) or Gln-tRNA(Gln) through the transamidation of misacylated Asp-tRNA(Asn) or Glu-tRNA(Gln) in organisms which lack either or both of asparaginyl-tRNA or glutaminyl-tRNA synthetases. The reaction takes place in the presence of glutamine and ATP through an activated phospho-Asp-tRNA(Asn) or phospho-Glu-tRNA(Gln).</text>
</comment>
<comment type="catalytic activity">
    <reaction evidence="1">
        <text>L-glutamyl-tRNA(Gln) + L-glutamine + ATP + H2O = L-glutaminyl-tRNA(Gln) + L-glutamate + ADP + phosphate + H(+)</text>
        <dbReference type="Rhea" id="RHEA:17521"/>
        <dbReference type="Rhea" id="RHEA-COMP:9681"/>
        <dbReference type="Rhea" id="RHEA-COMP:9684"/>
        <dbReference type="ChEBI" id="CHEBI:15377"/>
        <dbReference type="ChEBI" id="CHEBI:15378"/>
        <dbReference type="ChEBI" id="CHEBI:29985"/>
        <dbReference type="ChEBI" id="CHEBI:30616"/>
        <dbReference type="ChEBI" id="CHEBI:43474"/>
        <dbReference type="ChEBI" id="CHEBI:58359"/>
        <dbReference type="ChEBI" id="CHEBI:78520"/>
        <dbReference type="ChEBI" id="CHEBI:78521"/>
        <dbReference type="ChEBI" id="CHEBI:456216"/>
    </reaction>
</comment>
<comment type="catalytic activity">
    <reaction evidence="1">
        <text>L-aspartyl-tRNA(Asn) + L-glutamine + ATP + H2O = L-asparaginyl-tRNA(Asn) + L-glutamate + ADP + phosphate + 2 H(+)</text>
        <dbReference type="Rhea" id="RHEA:14513"/>
        <dbReference type="Rhea" id="RHEA-COMP:9674"/>
        <dbReference type="Rhea" id="RHEA-COMP:9677"/>
        <dbReference type="ChEBI" id="CHEBI:15377"/>
        <dbReference type="ChEBI" id="CHEBI:15378"/>
        <dbReference type="ChEBI" id="CHEBI:29985"/>
        <dbReference type="ChEBI" id="CHEBI:30616"/>
        <dbReference type="ChEBI" id="CHEBI:43474"/>
        <dbReference type="ChEBI" id="CHEBI:58359"/>
        <dbReference type="ChEBI" id="CHEBI:78515"/>
        <dbReference type="ChEBI" id="CHEBI:78516"/>
        <dbReference type="ChEBI" id="CHEBI:456216"/>
    </reaction>
</comment>
<comment type="subunit">
    <text evidence="1">Heterotrimer of A, B and C subunits.</text>
</comment>
<comment type="similarity">
    <text evidence="1">Belongs to the GatB/GatE family. GatB subfamily.</text>
</comment>
<keyword id="KW-0067">ATP-binding</keyword>
<keyword id="KW-0436">Ligase</keyword>
<keyword id="KW-0547">Nucleotide-binding</keyword>
<keyword id="KW-0648">Protein biosynthesis</keyword>
<proteinExistence type="inferred from homology"/>
<protein>
    <recommendedName>
        <fullName evidence="1">Aspartyl/glutamyl-tRNA(Asn/Gln) amidotransferase subunit B</fullName>
        <shortName evidence="1">Asp/Glu-ADT subunit B</shortName>
        <ecNumber evidence="1">6.3.5.-</ecNumber>
    </recommendedName>
</protein>
<gene>
    <name evidence="1" type="primary">gatB</name>
    <name type="ordered locus">M446_4336</name>
</gene>
<sequence length="490" mass="53354">MNAPVTPKKLIKGALGDWEVVIGMEIHAQVTSRSKLFSGASTAFGAEPNAHVSLVDAAMPGMLPVINRECVAQAVRTGLGLKAQINHRSVFDRKNYFYPDLPQGYQISQYKSPIVGEGEVLVDLPDGETIRVGIERLHLEQDAGKSLHDQHPSLSFVDLNRSGVALMEIVSKPDLRSSEEAKAYVTKLRTILRYLGTCDGDMEKGNLRADVNVSVRRPGEPFGTRCEIKNVNSIRFIGQAIETEARRQIAILEDGGWIEQETRLYDPNRNETRSMRSKEEAHDYRYFPDPDLLPLEIEQAFIDGLRTELPELPDAKKARFVAEYGLSAYDATVLVAERASADYFEAVAKGRDGKAAANWVINELFGRLNKEGHGIEGSPVSAAQLGAIIDLIADGTISGKIAKDLFEIVWGEGGDPRAIVESRGLKQVTDTGAIEAAVDQIIAANPDKVAQAKAKPTLLGWFVGQTMKATGGKANPAAVNALLKTKLGIE</sequence>
<organism>
    <name type="scientific">Methylobacterium sp. (strain 4-46)</name>
    <dbReference type="NCBI Taxonomy" id="426117"/>
    <lineage>
        <taxon>Bacteria</taxon>
        <taxon>Pseudomonadati</taxon>
        <taxon>Pseudomonadota</taxon>
        <taxon>Alphaproteobacteria</taxon>
        <taxon>Hyphomicrobiales</taxon>
        <taxon>Methylobacteriaceae</taxon>
        <taxon>Methylobacterium</taxon>
    </lineage>
</organism>
<accession>B0UHC4</accession>
<name>GATB_METS4</name>